<gene>
    <name evidence="1" type="primary">ureC</name>
    <name type="ordered locus">Achl_0392</name>
</gene>
<reference key="1">
    <citation type="submission" date="2009-01" db="EMBL/GenBank/DDBJ databases">
        <title>Complete sequence of chromosome of Arthrobacter chlorophenolicus A6.</title>
        <authorList>
            <consortium name="US DOE Joint Genome Institute"/>
            <person name="Lucas S."/>
            <person name="Copeland A."/>
            <person name="Lapidus A."/>
            <person name="Glavina del Rio T."/>
            <person name="Tice H."/>
            <person name="Bruce D."/>
            <person name="Goodwin L."/>
            <person name="Pitluck S."/>
            <person name="Goltsman E."/>
            <person name="Clum A."/>
            <person name="Larimer F."/>
            <person name="Land M."/>
            <person name="Hauser L."/>
            <person name="Kyrpides N."/>
            <person name="Mikhailova N."/>
            <person name="Jansson J."/>
            <person name="Richardson P."/>
        </authorList>
    </citation>
    <scope>NUCLEOTIDE SEQUENCE [LARGE SCALE GENOMIC DNA]</scope>
    <source>
        <strain>ATCC 700700 / DSM 12829 / CIP 107037 / JCM 12360 / KCTC 9906 / NCIMB 13794 / A6</strain>
    </source>
</reference>
<comment type="catalytic activity">
    <reaction evidence="1">
        <text>urea + 2 H2O + H(+) = hydrogencarbonate + 2 NH4(+)</text>
        <dbReference type="Rhea" id="RHEA:20557"/>
        <dbReference type="ChEBI" id="CHEBI:15377"/>
        <dbReference type="ChEBI" id="CHEBI:15378"/>
        <dbReference type="ChEBI" id="CHEBI:16199"/>
        <dbReference type="ChEBI" id="CHEBI:17544"/>
        <dbReference type="ChEBI" id="CHEBI:28938"/>
        <dbReference type="EC" id="3.5.1.5"/>
    </reaction>
</comment>
<comment type="cofactor">
    <cofactor evidence="1">
        <name>Ni cation</name>
        <dbReference type="ChEBI" id="CHEBI:25516"/>
    </cofactor>
    <text evidence="1">Binds 2 nickel ions per subunit.</text>
</comment>
<comment type="pathway">
    <text evidence="1">Nitrogen metabolism; urea degradation; CO(2) and NH(3) from urea (urease route): step 1/1.</text>
</comment>
<comment type="subunit">
    <text evidence="1">Heterotrimer of UreA (gamma), UreB (beta) and UreC (alpha) subunits. Three heterotrimers associate to form the active enzyme.</text>
</comment>
<comment type="subcellular location">
    <subcellularLocation>
        <location evidence="1">Cytoplasm</location>
    </subcellularLocation>
</comment>
<comment type="PTM">
    <text evidence="1">Carboxylation allows a single lysine to coordinate two nickel ions.</text>
</comment>
<comment type="similarity">
    <text evidence="1">Belongs to the metallo-dependent hydrolases superfamily. Urease alpha subunit family.</text>
</comment>
<sequence>MSFEIPRRQYADLYGPTTGDKIRLADTELFLEIEKDLTVYGEEVVFGGGKVIRDGMGQNGQATRDEDIPDTVITNAVILDHSGIYKADVALRDGHIFRIGKAGNPQITDGVDIVIGASTEIIAGERKILTAGGIDTHIHFISPDQVATALTSGVTTMIGGGTGPAEGTKATTVTPGKWHIHRMLQAAEAFPMNIGLFGKGHASAVEPLAEQIRAGAIGLKVHEDWGSTTSSIDMSLTVADEYDVQVAIHTDTLNECGFVEDTIRAINGRVIHTFHTEGAGGGHAPDIIKIAGMPNVLPASTNPTLPYTRNTIEEHLDMLMVCHHLNPDIPEDVAFADSRIRAETIAAEDVLQDMGIFSITSSDSQAMGRVGEVITRTWQVADKMKKQRGILAADGGMDLGADGSASAHGSAGSDNFRLKRYVAKYTINPALAQGIADTVGSVEEGKFADLVLWDPAFFGVKPELVLKGGQIAYALMGDANASIPTPQPRTMRPMFGAFGKAVQQTSITFLSKAAIDAGVPEELGLEKLIRPVSGIRNLTKADLKYNDATPDIQVDPETYQVTVDGEDVTCEPADVLPMAQRYFLF</sequence>
<organism>
    <name type="scientific">Pseudarthrobacter chlorophenolicus (strain ATCC 700700 / DSM 12829 / CIP 107037 / JCM 12360 / KCTC 9906 / NCIMB 13794 / A6)</name>
    <name type="common">Arthrobacter chlorophenolicus</name>
    <dbReference type="NCBI Taxonomy" id="452863"/>
    <lineage>
        <taxon>Bacteria</taxon>
        <taxon>Bacillati</taxon>
        <taxon>Actinomycetota</taxon>
        <taxon>Actinomycetes</taxon>
        <taxon>Micrococcales</taxon>
        <taxon>Micrococcaceae</taxon>
        <taxon>Pseudarthrobacter</taxon>
    </lineage>
</organism>
<feature type="chain" id="PRO_1000188861" description="Urease subunit alpha">
    <location>
        <begin position="1"/>
        <end position="585"/>
    </location>
</feature>
<feature type="domain" description="Urease" evidence="1">
    <location>
        <begin position="132"/>
        <end position="585"/>
    </location>
</feature>
<feature type="active site" description="Proton donor" evidence="1">
    <location>
        <position position="323"/>
    </location>
</feature>
<feature type="binding site" evidence="1">
    <location>
        <position position="137"/>
    </location>
    <ligand>
        <name>Ni(2+)</name>
        <dbReference type="ChEBI" id="CHEBI:49786"/>
        <label>1</label>
    </ligand>
</feature>
<feature type="binding site" evidence="1">
    <location>
        <position position="139"/>
    </location>
    <ligand>
        <name>Ni(2+)</name>
        <dbReference type="ChEBI" id="CHEBI:49786"/>
        <label>1</label>
    </ligand>
</feature>
<feature type="binding site" description="via carbamate group" evidence="1">
    <location>
        <position position="220"/>
    </location>
    <ligand>
        <name>Ni(2+)</name>
        <dbReference type="ChEBI" id="CHEBI:49786"/>
        <label>1</label>
    </ligand>
</feature>
<feature type="binding site" description="via carbamate group" evidence="1">
    <location>
        <position position="220"/>
    </location>
    <ligand>
        <name>Ni(2+)</name>
        <dbReference type="ChEBI" id="CHEBI:49786"/>
        <label>2</label>
    </ligand>
</feature>
<feature type="binding site" evidence="1">
    <location>
        <position position="222"/>
    </location>
    <ligand>
        <name>substrate</name>
    </ligand>
</feature>
<feature type="binding site" evidence="1">
    <location>
        <position position="249"/>
    </location>
    <ligand>
        <name>Ni(2+)</name>
        <dbReference type="ChEBI" id="CHEBI:49786"/>
        <label>2</label>
    </ligand>
</feature>
<feature type="binding site" evidence="1">
    <location>
        <position position="275"/>
    </location>
    <ligand>
        <name>Ni(2+)</name>
        <dbReference type="ChEBI" id="CHEBI:49786"/>
        <label>2</label>
    </ligand>
</feature>
<feature type="binding site" evidence="1">
    <location>
        <position position="363"/>
    </location>
    <ligand>
        <name>Ni(2+)</name>
        <dbReference type="ChEBI" id="CHEBI:49786"/>
        <label>1</label>
    </ligand>
</feature>
<feature type="modified residue" description="N6-carboxylysine" evidence="1">
    <location>
        <position position="220"/>
    </location>
</feature>
<proteinExistence type="inferred from homology"/>
<protein>
    <recommendedName>
        <fullName evidence="1">Urease subunit alpha</fullName>
        <ecNumber evidence="1">3.5.1.5</ecNumber>
    </recommendedName>
    <alternativeName>
        <fullName evidence="1">Urea amidohydrolase subunit alpha</fullName>
    </alternativeName>
</protein>
<evidence type="ECO:0000255" key="1">
    <source>
        <dbReference type="HAMAP-Rule" id="MF_01953"/>
    </source>
</evidence>
<name>URE1_PSECP</name>
<keyword id="KW-0963">Cytoplasm</keyword>
<keyword id="KW-0378">Hydrolase</keyword>
<keyword id="KW-0479">Metal-binding</keyword>
<keyword id="KW-0533">Nickel</keyword>
<accession>B8HA07</accession>
<dbReference type="EC" id="3.5.1.5" evidence="1"/>
<dbReference type="EMBL" id="CP001341">
    <property type="protein sequence ID" value="ACL38391.1"/>
    <property type="molecule type" value="Genomic_DNA"/>
</dbReference>
<dbReference type="RefSeq" id="WP_015935618.1">
    <property type="nucleotide sequence ID" value="NC_011886.1"/>
</dbReference>
<dbReference type="SMR" id="B8HA07"/>
<dbReference type="STRING" id="452863.Achl_0392"/>
<dbReference type="MEROPS" id="M38.982"/>
<dbReference type="KEGG" id="ach:Achl_0392"/>
<dbReference type="eggNOG" id="COG0804">
    <property type="taxonomic scope" value="Bacteria"/>
</dbReference>
<dbReference type="HOGENOM" id="CLU_000980_0_0_11"/>
<dbReference type="OrthoDB" id="9802793at2"/>
<dbReference type="UniPathway" id="UPA00258">
    <property type="reaction ID" value="UER00370"/>
</dbReference>
<dbReference type="Proteomes" id="UP000002505">
    <property type="component" value="Chromosome"/>
</dbReference>
<dbReference type="GO" id="GO:0005737">
    <property type="term" value="C:cytoplasm"/>
    <property type="evidence" value="ECO:0007669"/>
    <property type="project" value="UniProtKB-SubCell"/>
</dbReference>
<dbReference type="GO" id="GO:0016151">
    <property type="term" value="F:nickel cation binding"/>
    <property type="evidence" value="ECO:0007669"/>
    <property type="project" value="UniProtKB-UniRule"/>
</dbReference>
<dbReference type="GO" id="GO:0009039">
    <property type="term" value="F:urease activity"/>
    <property type="evidence" value="ECO:0007669"/>
    <property type="project" value="UniProtKB-UniRule"/>
</dbReference>
<dbReference type="GO" id="GO:0043419">
    <property type="term" value="P:urea catabolic process"/>
    <property type="evidence" value="ECO:0007669"/>
    <property type="project" value="UniProtKB-UniRule"/>
</dbReference>
<dbReference type="CDD" id="cd00375">
    <property type="entry name" value="Urease_alpha"/>
    <property type="match status" value="1"/>
</dbReference>
<dbReference type="Gene3D" id="3.20.20.140">
    <property type="entry name" value="Metal-dependent hydrolases"/>
    <property type="match status" value="1"/>
</dbReference>
<dbReference type="Gene3D" id="2.30.40.10">
    <property type="entry name" value="Urease, subunit C, domain 1"/>
    <property type="match status" value="1"/>
</dbReference>
<dbReference type="HAMAP" id="MF_01953">
    <property type="entry name" value="Urease_alpha"/>
    <property type="match status" value="1"/>
</dbReference>
<dbReference type="InterPro" id="IPR006680">
    <property type="entry name" value="Amidohydro-rel"/>
</dbReference>
<dbReference type="InterPro" id="IPR011059">
    <property type="entry name" value="Metal-dep_hydrolase_composite"/>
</dbReference>
<dbReference type="InterPro" id="IPR032466">
    <property type="entry name" value="Metal_Hydrolase"/>
</dbReference>
<dbReference type="InterPro" id="IPR011612">
    <property type="entry name" value="Urease_alpha_N_dom"/>
</dbReference>
<dbReference type="InterPro" id="IPR050112">
    <property type="entry name" value="Urease_alpha_subunit"/>
</dbReference>
<dbReference type="InterPro" id="IPR017950">
    <property type="entry name" value="Urease_AS"/>
</dbReference>
<dbReference type="InterPro" id="IPR005848">
    <property type="entry name" value="Urease_asu"/>
</dbReference>
<dbReference type="InterPro" id="IPR017951">
    <property type="entry name" value="Urease_asu_c"/>
</dbReference>
<dbReference type="InterPro" id="IPR029754">
    <property type="entry name" value="Urease_Ni-bd"/>
</dbReference>
<dbReference type="NCBIfam" id="NF009685">
    <property type="entry name" value="PRK13206.1"/>
    <property type="match status" value="1"/>
</dbReference>
<dbReference type="NCBIfam" id="NF009686">
    <property type="entry name" value="PRK13207.1"/>
    <property type="match status" value="1"/>
</dbReference>
<dbReference type="NCBIfam" id="TIGR01792">
    <property type="entry name" value="urease_alph"/>
    <property type="match status" value="1"/>
</dbReference>
<dbReference type="PANTHER" id="PTHR43440">
    <property type="entry name" value="UREASE"/>
    <property type="match status" value="1"/>
</dbReference>
<dbReference type="PANTHER" id="PTHR43440:SF1">
    <property type="entry name" value="UREASE"/>
    <property type="match status" value="1"/>
</dbReference>
<dbReference type="Pfam" id="PF01979">
    <property type="entry name" value="Amidohydro_1"/>
    <property type="match status" value="1"/>
</dbReference>
<dbReference type="Pfam" id="PF00449">
    <property type="entry name" value="Urease_alpha"/>
    <property type="match status" value="1"/>
</dbReference>
<dbReference type="PRINTS" id="PR01752">
    <property type="entry name" value="UREASE"/>
</dbReference>
<dbReference type="SUPFAM" id="SSF51338">
    <property type="entry name" value="Composite domain of metallo-dependent hydrolases"/>
    <property type="match status" value="2"/>
</dbReference>
<dbReference type="SUPFAM" id="SSF51556">
    <property type="entry name" value="Metallo-dependent hydrolases"/>
    <property type="match status" value="1"/>
</dbReference>
<dbReference type="PROSITE" id="PS01120">
    <property type="entry name" value="UREASE_1"/>
    <property type="match status" value="1"/>
</dbReference>
<dbReference type="PROSITE" id="PS00145">
    <property type="entry name" value="UREASE_2"/>
    <property type="match status" value="1"/>
</dbReference>
<dbReference type="PROSITE" id="PS51368">
    <property type="entry name" value="UREASE_3"/>
    <property type="match status" value="1"/>
</dbReference>